<sequence length="73" mass="8257">MASTPSLIGLTYAGLAVLYLLVLPLLSLLYVDKRWTSGSAWEKVLMFFLVLFFFPGMVLLAPFMTFRPKPRSL</sequence>
<gene>
    <name evidence="1" type="primary">ndhL</name>
    <name type="ordered locus">CYB_2375</name>
</gene>
<comment type="function">
    <text evidence="1">NDH-1 shuttles electrons from an unknown electron donor, via FMN and iron-sulfur (Fe-S) centers, to quinones in the respiratory and/or the photosynthetic chain. The immediate electron acceptor for the enzyme in this species is believed to be plastoquinone. Couples the redox reaction to proton translocation, and thus conserves the redox energy in a proton gradient. Cyanobacterial NDH-1 also plays a role in inorganic carbon-concentration.</text>
</comment>
<comment type="catalytic activity">
    <reaction evidence="1">
        <text>a plastoquinone + NADH + (n+1) H(+)(in) = a plastoquinol + NAD(+) + n H(+)(out)</text>
        <dbReference type="Rhea" id="RHEA:42608"/>
        <dbReference type="Rhea" id="RHEA-COMP:9561"/>
        <dbReference type="Rhea" id="RHEA-COMP:9562"/>
        <dbReference type="ChEBI" id="CHEBI:15378"/>
        <dbReference type="ChEBI" id="CHEBI:17757"/>
        <dbReference type="ChEBI" id="CHEBI:57540"/>
        <dbReference type="ChEBI" id="CHEBI:57945"/>
        <dbReference type="ChEBI" id="CHEBI:62192"/>
    </reaction>
</comment>
<comment type="catalytic activity">
    <reaction evidence="1">
        <text>a plastoquinone + NADPH + (n+1) H(+)(in) = a plastoquinol + NADP(+) + n H(+)(out)</text>
        <dbReference type="Rhea" id="RHEA:42612"/>
        <dbReference type="Rhea" id="RHEA-COMP:9561"/>
        <dbReference type="Rhea" id="RHEA-COMP:9562"/>
        <dbReference type="ChEBI" id="CHEBI:15378"/>
        <dbReference type="ChEBI" id="CHEBI:17757"/>
        <dbReference type="ChEBI" id="CHEBI:57783"/>
        <dbReference type="ChEBI" id="CHEBI:58349"/>
        <dbReference type="ChEBI" id="CHEBI:62192"/>
    </reaction>
</comment>
<comment type="subunit">
    <text evidence="1">NDH-1 can be composed of about 15 different subunits; different subcomplexes with different compositions have been identified which probably have different functions.</text>
</comment>
<comment type="subcellular location">
    <subcellularLocation>
        <location evidence="1">Cellular thylakoid membrane</location>
        <topology evidence="1">Multi-pass membrane protein</topology>
    </subcellularLocation>
</comment>
<comment type="similarity">
    <text evidence="1">Belongs to the complex I NdhL subunit family.</text>
</comment>
<accession>Q2JJ68</accession>
<feature type="chain" id="PRO_0000353690" description="NAD(P)H-quinone oxidoreductase subunit L">
    <location>
        <begin position="1"/>
        <end position="73"/>
    </location>
</feature>
<feature type="transmembrane region" description="Helical" evidence="1">
    <location>
        <begin position="6"/>
        <end position="26"/>
    </location>
</feature>
<feature type="transmembrane region" description="Helical" evidence="1">
    <location>
        <begin position="44"/>
        <end position="64"/>
    </location>
</feature>
<protein>
    <recommendedName>
        <fullName evidence="1">NAD(P)H-quinone oxidoreductase subunit L</fullName>
        <ecNumber evidence="1">7.1.1.-</ecNumber>
    </recommendedName>
    <alternativeName>
        <fullName evidence="1">NAD(P)H dehydrogenase I subunit L</fullName>
    </alternativeName>
    <alternativeName>
        <fullName>NDH-1 subunit L</fullName>
    </alternativeName>
    <alternativeName>
        <fullName>NDH-L</fullName>
    </alternativeName>
</protein>
<keyword id="KW-0472">Membrane</keyword>
<keyword id="KW-0520">NAD</keyword>
<keyword id="KW-0521">NADP</keyword>
<keyword id="KW-0618">Plastoquinone</keyword>
<keyword id="KW-0874">Quinone</keyword>
<keyword id="KW-1185">Reference proteome</keyword>
<keyword id="KW-0793">Thylakoid</keyword>
<keyword id="KW-1278">Translocase</keyword>
<keyword id="KW-0812">Transmembrane</keyword>
<keyword id="KW-1133">Transmembrane helix</keyword>
<keyword id="KW-0813">Transport</keyword>
<reference key="1">
    <citation type="journal article" date="2007" name="ISME J.">
        <title>Population level functional diversity in a microbial community revealed by comparative genomic and metagenomic analyses.</title>
        <authorList>
            <person name="Bhaya D."/>
            <person name="Grossman A.R."/>
            <person name="Steunou A.-S."/>
            <person name="Khuri N."/>
            <person name="Cohan F.M."/>
            <person name="Hamamura N."/>
            <person name="Melendrez M.C."/>
            <person name="Bateson M.M."/>
            <person name="Ward D.M."/>
            <person name="Heidelberg J.F."/>
        </authorList>
    </citation>
    <scope>NUCLEOTIDE SEQUENCE [LARGE SCALE GENOMIC DNA]</scope>
    <source>
        <strain>JA-2-3B'a(2-13)</strain>
    </source>
</reference>
<proteinExistence type="inferred from homology"/>
<dbReference type="EC" id="7.1.1.-" evidence="1"/>
<dbReference type="EMBL" id="CP000240">
    <property type="protein sequence ID" value="ABD03313.1"/>
    <property type="molecule type" value="Genomic_DNA"/>
</dbReference>
<dbReference type="RefSeq" id="WP_011433942.1">
    <property type="nucleotide sequence ID" value="NC_007776.1"/>
</dbReference>
<dbReference type="SMR" id="Q2JJ68"/>
<dbReference type="STRING" id="321332.CYB_2375"/>
<dbReference type="KEGG" id="cyb:CYB_2375"/>
<dbReference type="HOGENOM" id="CLU_171077_0_0_3"/>
<dbReference type="Proteomes" id="UP000001938">
    <property type="component" value="Chromosome"/>
</dbReference>
<dbReference type="GO" id="GO:0031676">
    <property type="term" value="C:plasma membrane-derived thylakoid membrane"/>
    <property type="evidence" value="ECO:0007669"/>
    <property type="project" value="UniProtKB-SubCell"/>
</dbReference>
<dbReference type="GO" id="GO:0016655">
    <property type="term" value="F:oxidoreductase activity, acting on NAD(P)H, quinone or similar compound as acceptor"/>
    <property type="evidence" value="ECO:0007669"/>
    <property type="project" value="UniProtKB-UniRule"/>
</dbReference>
<dbReference type="GO" id="GO:0048038">
    <property type="term" value="F:quinone binding"/>
    <property type="evidence" value="ECO:0007669"/>
    <property type="project" value="UniProtKB-KW"/>
</dbReference>
<dbReference type="HAMAP" id="MF_01355">
    <property type="entry name" value="NDH1_NDH1L"/>
    <property type="match status" value="1"/>
</dbReference>
<dbReference type="InterPro" id="IPR019654">
    <property type="entry name" value="NADH-quinone_OxRdatse_su_L"/>
</dbReference>
<dbReference type="PANTHER" id="PTHR36727">
    <property type="entry name" value="NAD(P)H-QUINONE OXIDOREDUCTASE SUBUNIT L, CHLOROPLASTIC"/>
    <property type="match status" value="1"/>
</dbReference>
<dbReference type="PANTHER" id="PTHR36727:SF2">
    <property type="entry name" value="NAD(P)H-QUINONE OXIDOREDUCTASE SUBUNIT L, CHLOROPLASTIC"/>
    <property type="match status" value="1"/>
</dbReference>
<dbReference type="Pfam" id="PF10716">
    <property type="entry name" value="NdhL"/>
    <property type="match status" value="1"/>
</dbReference>
<name>NDHL_SYNJB</name>
<organism>
    <name type="scientific">Synechococcus sp. (strain JA-2-3B'a(2-13))</name>
    <name type="common">Cyanobacteria bacterium Yellowstone B-Prime</name>
    <dbReference type="NCBI Taxonomy" id="321332"/>
    <lineage>
        <taxon>Bacteria</taxon>
        <taxon>Bacillati</taxon>
        <taxon>Cyanobacteriota</taxon>
        <taxon>Cyanophyceae</taxon>
        <taxon>Synechococcales</taxon>
        <taxon>Synechococcaceae</taxon>
        <taxon>Synechococcus</taxon>
    </lineage>
</organism>
<evidence type="ECO:0000255" key="1">
    <source>
        <dbReference type="HAMAP-Rule" id="MF_01355"/>
    </source>
</evidence>